<organism>
    <name type="scientific">Bacillus phage phi29</name>
    <name type="common">Bacteriophage phi-29</name>
    <dbReference type="NCBI Taxonomy" id="2884424"/>
    <lineage>
        <taxon>Viruses</taxon>
        <taxon>Duplodnaviria</taxon>
        <taxon>Heunggongvirae</taxon>
        <taxon>Uroviricota</taxon>
        <taxon>Caudoviricetes</taxon>
        <taxon>Salasmaviridae</taxon>
        <taxon>Picovirinae</taxon>
        <taxon>Salasvirus</taxon>
        <taxon>Salasvirus phi29</taxon>
    </lineage>
</organism>
<protein>
    <recommendedName>
        <fullName evidence="10">Late genes activator p4</fullName>
    </recommendedName>
    <alternativeName>
        <fullName evidence="10">Gene product 4</fullName>
        <shortName evidence="10">gp4</shortName>
    </alternativeName>
    <alternativeName>
        <fullName evidence="10">Protein p4</fullName>
    </alternativeName>
</protein>
<evidence type="ECO:0000255" key="1"/>
<evidence type="ECO:0000269" key="2">
    <source>
    </source>
</evidence>
<evidence type="ECO:0000269" key="3">
    <source>
    </source>
</evidence>
<evidence type="ECO:0000269" key="4">
    <source>
    </source>
</evidence>
<evidence type="ECO:0000269" key="5">
    <source>
    </source>
</evidence>
<evidence type="ECO:0000269" key="6">
    <source>
    </source>
</evidence>
<evidence type="ECO:0000269" key="7">
    <source>
    </source>
</evidence>
<evidence type="ECO:0000269" key="8">
    <source>
    </source>
</evidence>
<evidence type="ECO:0000269" key="9">
    <source>
    </source>
</evidence>
<evidence type="ECO:0000305" key="10"/>
<evidence type="ECO:0007829" key="11">
    <source>
        <dbReference type="PDB" id="2FIO"/>
    </source>
</evidence>
<evidence type="ECO:0007829" key="12">
    <source>
        <dbReference type="PDB" id="2FIP"/>
    </source>
</evidence>
<feature type="chain" id="PRO_0000106560" description="Late genes activator p4">
    <location>
        <begin position="1"/>
        <end position="125"/>
    </location>
</feature>
<feature type="DNA-binding region" description="H-T-H motif" evidence="1">
    <location>
        <begin position="77"/>
        <end position="96"/>
    </location>
</feature>
<feature type="site" description="Interaction with host RNA polymerase and activation of the phi29 late A3 promoter" evidence="8">
    <location>
        <position position="120"/>
    </location>
</feature>
<feature type="mutagenesis site" description="No effect on transcription activation from the A3 promoter and on transcription repression from the A2c promoter. No effect on the interaction with host RNAP." evidence="7">
    <original>R</original>
    <variation>E</variation>
    <location>
        <position position="116"/>
    </location>
</feature>
<feature type="mutagenesis site" description="60% loss of transcription activation from the A3 promoter and 60% loss of transcription repression from the A2c promoter. Poor interaction with host RNAP." evidence="7">
    <original>L</original>
    <variation>A</variation>
    <location>
        <position position="117"/>
    </location>
</feature>
<feature type="mutagenesis site" description="No effect on transcription activation from the A3 promoter and on transcription repression from the A2c promoter. No effect on the interaction with host RNAP." evidence="7">
    <original>E</original>
    <variation>Q</variation>
    <location>
        <position position="119"/>
    </location>
</feature>
<feature type="mutagenesis site" description="80% loss of transcription activation from the A3 promoter and 80% loss of transcription repression from the A2c promoter. Complete loss of interaction with host RNAP." evidence="7">
    <original>R</original>
    <variation>Q</variation>
    <location>
        <position position="120"/>
    </location>
</feature>
<feature type="helix" evidence="12">
    <location>
        <begin position="12"/>
        <end position="14"/>
    </location>
</feature>
<feature type="strand" evidence="12">
    <location>
        <begin position="18"/>
        <end position="20"/>
    </location>
</feature>
<feature type="strand" evidence="12">
    <location>
        <begin position="22"/>
        <end position="27"/>
    </location>
</feature>
<feature type="helix" evidence="12">
    <location>
        <begin position="31"/>
        <end position="53"/>
    </location>
</feature>
<feature type="helix" evidence="12">
    <location>
        <begin position="63"/>
        <end position="74"/>
    </location>
</feature>
<feature type="strand" evidence="12">
    <location>
        <begin position="81"/>
        <end position="83"/>
    </location>
</feature>
<feature type="strand" evidence="12">
    <location>
        <begin position="86"/>
        <end position="88"/>
    </location>
</feature>
<feature type="helix" evidence="12">
    <location>
        <begin position="90"/>
        <end position="100"/>
    </location>
</feature>
<feature type="strand" evidence="11">
    <location>
        <begin position="103"/>
        <end position="105"/>
    </location>
</feature>
<feature type="strand" evidence="12">
    <location>
        <begin position="110"/>
        <end position="112"/>
    </location>
</feature>
<feature type="helix" evidence="11">
    <location>
        <begin position="117"/>
        <end position="123"/>
    </location>
</feature>
<dbReference type="EMBL" id="J02479">
    <property type="status" value="NOT_ANNOTATED_CDS"/>
    <property type="molecule type" value="Genomic_DNA"/>
</dbReference>
<dbReference type="EMBL" id="V01155">
    <property type="protein sequence ID" value="CAA24482.1"/>
    <property type="molecule type" value="Genomic_DNA"/>
</dbReference>
<dbReference type="EMBL" id="EU771092">
    <property type="protein sequence ID" value="ACE96025.1"/>
    <property type="molecule type" value="Genomic_DNA"/>
</dbReference>
<dbReference type="PIR" id="C93439">
    <property type="entry name" value="ERBP49"/>
</dbReference>
<dbReference type="RefSeq" id="YP_002004531.1">
    <property type="nucleotide sequence ID" value="NC_011048.1"/>
</dbReference>
<dbReference type="PDB" id="2FIO">
    <property type="method" value="X-ray"/>
    <property type="resolution" value="2.70 A"/>
    <property type="chains" value="A/B=2-124"/>
</dbReference>
<dbReference type="PDB" id="2FIP">
    <property type="method" value="X-ray"/>
    <property type="resolution" value="2.00 A"/>
    <property type="chains" value="A/B/C/D/E/F=2-116"/>
</dbReference>
<dbReference type="PDBsum" id="2FIO"/>
<dbReference type="PDBsum" id="2FIP"/>
<dbReference type="SMR" id="P03682"/>
<dbReference type="GeneID" id="6446523"/>
<dbReference type="KEGG" id="vg:6446523"/>
<dbReference type="EvolutionaryTrace" id="P03682"/>
<dbReference type="Proteomes" id="UP000001207">
    <property type="component" value="Genome"/>
</dbReference>
<dbReference type="GO" id="GO:0003677">
    <property type="term" value="F:DNA binding"/>
    <property type="evidence" value="ECO:0000314"/>
    <property type="project" value="UniProtKB"/>
</dbReference>
<dbReference type="GO" id="GO:0003899">
    <property type="term" value="F:DNA-directed RNA polymerase activity"/>
    <property type="evidence" value="ECO:0007669"/>
    <property type="project" value="InterPro"/>
</dbReference>
<dbReference type="GO" id="GO:0016987">
    <property type="term" value="F:sigma factor activity"/>
    <property type="evidence" value="ECO:0007669"/>
    <property type="project" value="UniProtKB-KW"/>
</dbReference>
<dbReference type="GO" id="GO:0006355">
    <property type="term" value="P:regulation of DNA-templated transcription"/>
    <property type="evidence" value="ECO:0000314"/>
    <property type="project" value="UniProtKB"/>
</dbReference>
<dbReference type="FunFam" id="3.30.70.3560:FF:000001">
    <property type="entry name" value="Late genes activator p4"/>
    <property type="match status" value="1"/>
</dbReference>
<dbReference type="Gene3D" id="3.30.70.3560">
    <property type="entry name" value="Phi-29-like late genes activator, P4"/>
    <property type="match status" value="1"/>
</dbReference>
<dbReference type="InterPro" id="IPR038246">
    <property type="entry name" value="Phi-29-like_sf"/>
</dbReference>
<dbReference type="InterPro" id="IPR008771">
    <property type="entry name" value="Phi-29_GP4"/>
</dbReference>
<dbReference type="Pfam" id="PF05464">
    <property type="entry name" value="Phi-29_GP4"/>
    <property type="match status" value="1"/>
</dbReference>
<gene>
    <name type="primary">4</name>
</gene>
<proteinExistence type="evidence at protein level"/>
<organismHost>
    <name type="scientific">Bacillus subtilis</name>
    <dbReference type="NCBI Taxonomy" id="1423"/>
</organismHost>
<accession>P03682</accession>
<accession>B3VMN8</accession>
<name>TF4_BPPH2</name>
<keyword id="KW-0002">3D-structure</keyword>
<keyword id="KW-0010">Activator</keyword>
<keyword id="KW-0238">DNA-binding</keyword>
<keyword id="KW-0244">Early protein</keyword>
<keyword id="KW-1185">Reference proteome</keyword>
<keyword id="KW-0678">Repressor</keyword>
<keyword id="KW-0731">Sigma factor</keyword>
<keyword id="KW-0804">Transcription</keyword>
<keyword id="KW-0805">Transcription regulation</keyword>
<reference key="1">
    <citation type="journal article" date="1982" name="Nucleic Acids Res.">
        <title>Nucleotide sequence of the early genes 3 and 4 of bacteriophage phi 29.</title>
        <authorList>
            <person name="Escarmis C."/>
            <person name="Salas M."/>
        </authorList>
    </citation>
    <scope>NUCLEOTIDE SEQUENCE [GENOMIC DNA]</scope>
</reference>
<reference key="2">
    <citation type="journal article" date="1982" name="Gene">
        <title>Nucleotide sequence of the major early region of bacteriophage phi 29.</title>
        <authorList>
            <person name="Yoshikawa H."/>
            <person name="Ito J."/>
        </authorList>
    </citation>
    <scope>NUCLEOTIDE SEQUENCE [GENOMIC DNA]</scope>
</reference>
<reference key="3">
    <citation type="submission" date="2008-05" db="EMBL/GenBank/DDBJ databases">
        <authorList>
            <person name="Villegas A.P."/>
            <person name="Lingohr E.J."/>
            <person name="Ceyssens P.-J."/>
            <person name="Kropinski A.M."/>
        </authorList>
    </citation>
    <scope>NUCLEOTIDE SEQUENCE [GENOMIC DNA]</scope>
</reference>
<reference key="4">
    <citation type="journal article" date="1990" name="J. Mol. Biol.">
        <title>Bend induced by the phage phi 29 transcriptional activator in the viral late promoter is required for activation.</title>
        <authorList>
            <person name="Rojo F."/>
            <person name="Zaballos A."/>
            <person name="Salas M."/>
        </authorList>
    </citation>
    <scope>FUNCTION</scope>
    <scope>DNA-BINDING</scope>
</reference>
<reference key="5">
    <citation type="journal article" date="1996" name="EMBO J.">
        <title>Activation and repression of transcription at two different phage phi29 promoters are mediated by interaction of the same residues of regulatory protein p4 with RNA polymerase.</title>
        <authorList>
            <person name="Monsalve M."/>
            <person name="Mencia M."/>
            <person name="Rojo F."/>
            <person name="Salas M."/>
        </authorList>
    </citation>
    <scope>INTERACTION WITH HOST RNA POLYMERASE</scope>
    <scope>FUNCTION</scope>
    <scope>MUTAGENESIS OF ARG-116; LEU-117; GLU-119 AND ARG-120</scope>
    <scope>DNA-BINDING</scope>
</reference>
<reference key="6">
    <citation type="journal article" date="1996" name="Proc. Natl. Acad. Sci. U.S.A.">
        <title>Protein p4 represses phage phi 29 A2c promoter by interacting with the alpha subunit of Bacillus subtilis RNA polymerase.</title>
        <authorList>
            <person name="Monsalve M."/>
            <person name="Mencia M."/>
            <person name="Salas M."/>
            <person name="Rojo F."/>
        </authorList>
    </citation>
    <scope>INTERACTION WITH HOST RNA POLYMERASE</scope>
    <scope>DNA-BINDING</scope>
</reference>
<reference key="7">
    <citation type="journal article" date="1998" name="Prog. Nucleic Acid Res. Mol. Biol.">
        <title>Transcription activation and repression by interaction of a regulator with the alpha subunit of RNA polymerase: the model of phage phi 29 protein p4.</title>
        <authorList>
            <person name="Rojo F."/>
            <person name="Mencia M."/>
            <person name="Monsalve M."/>
            <person name="Salas M."/>
        </authorList>
    </citation>
    <scope>REVIEW</scope>
</reference>
<reference key="8">
    <citation type="journal article" date="1998" name="J. Mol. Biol.">
        <title>Binding of phage phi29 protein p4 to the early A2c promoter: recruitment of a repressor by the RNA polymerase.</title>
        <authorList>
            <person name="Monsalve M."/>
            <person name="Calles B."/>
            <person name="Mencia M."/>
            <person name="Rojo F."/>
            <person name="Salas M."/>
        </authorList>
    </citation>
    <scope>FUNCTION</scope>
    <scope>INTERACTION WITH HOST RNA POLYMERASE</scope>
</reference>
<reference key="9">
    <citation type="journal article" date="2010" name="Int. J. Mol. Sci.">
        <title>Molecular interactions and protein-induced DNA hairpin in the transcriptional control of bacteriophage phi29 DNA.</title>
        <authorList>
            <person name="Camacho A."/>
            <person name="Salas M."/>
        </authorList>
    </citation>
    <scope>FUNCTION</scope>
</reference>
<reference key="10">
    <citation type="journal article" date="2006" name="Mol. Cell">
        <title>The structure of phage phi29 transcription regulator p4-DNA complex reveals an N-hook motif for DNA.</title>
        <authorList>
            <person name="Badia D."/>
            <person name="Camacho A."/>
            <person name="Perez-Lago L."/>
            <person name="Escandon C."/>
            <person name="Salas M."/>
            <person name="Coll M."/>
        </authorList>
    </citation>
    <scope>X-RAY CRYSTALLOGRAPHY (2.7 ANGSTROMS) OF 2-116 IN COMPLEX WITH DNA</scope>
</reference>
<reference key="11">
    <citation type="journal article" date="2001" name="EMBO J.">
        <title>Mechanism for the switch of phi29 DNA early to late transcription by regulatory protein p4 and histone-like protein p6.</title>
        <authorList>
            <person name="Camacho A."/>
            <person name="Salas M."/>
        </authorList>
    </citation>
    <scope>FUNCTION</scope>
</reference>
<reference key="12">
    <citation type="journal article" date="2002" name="EMBO J.">
        <title>The phi29 transcriptional regulator contacts the nucleoid protein p6 to organize a repression complex.</title>
        <authorList>
            <person name="Calles B."/>
            <person name="Salas M."/>
            <person name="Rojo F."/>
        </authorList>
    </citation>
    <scope>FUNCTION</scope>
    <scope>INTERACTION WITH HISTONE-LIKE PROTEIN P6</scope>
</reference>
<reference key="13">
    <citation type="journal article" date="2004" name="J. Mol. Biol.">
        <title>Molecular interplay between RNA polymerase and two transcriptional regulators in promoter switch.</title>
        <authorList>
            <person name="Camacho A."/>
            <person name="Salas M."/>
        </authorList>
    </citation>
    <scope>FUNCTION</scope>
</reference>
<comment type="function">
    <text evidence="2 3 4 5 6 7 9">Mediates, together with protein p6, the early to late transcriptional switch by stabilizing the binding of host RNA polymerase (RNAP) to the late A3 promoter. Activates transcription from the late A3 promoter and represses the main early promoters A2b and A2c by modifying the topology of the sequences encompassing early promoters A2c and A2b and late promoter A3 in a hairpin. Proteins p6 and p4 bind cooperatively to an approximately 200 bp DNA region located between the late A3 and the early A2c promoters. Binding of p4 molecules induces the reorganization of the binding of protein p6, giving rise to the nucleoprotein complex responsible for the switch from early to late transcription.</text>
</comment>
<comment type="subunit">
    <text evidence="3 7 8 9">Interacts with host RNA polymerase (via C-terminus) (PubMed:8617213, PubMed:8799127, PubMed:9784366). Interacts with DNA; binds to the A2b, A2c and A3 promoters (PubMed:8617213). Interacts (via C-terminus) with the histone-like protein p6 (PubMed:12426390).</text>
</comment>
<comment type="similarity">
    <text evidence="10">Belongs to the phi29likevirus late genes activator p4 family.</text>
</comment>
<sequence>MPKTQRGIYHNLKESEYVASNTDVTFFFSSELYLNKFLDGYQEYRKKFNKKIERVAVTPWNMDMLADITFYSEVEKRGFHAWLKGDNATWREVHVYALRIMTKPNTLDWSRIQKPRLRERRKSMV</sequence>